<dbReference type="PIR" id="G31445">
    <property type="entry name" value="G31445"/>
</dbReference>
<dbReference type="BMRB" id="P67945"/>
<dbReference type="SMR" id="P67945"/>
<dbReference type="GO" id="GO:0005576">
    <property type="term" value="C:extracellular region"/>
    <property type="evidence" value="ECO:0007669"/>
    <property type="project" value="UniProtKB-SubCell"/>
</dbReference>
<dbReference type="GO" id="GO:0004867">
    <property type="term" value="F:serine-type endopeptidase inhibitor activity"/>
    <property type="evidence" value="ECO:0007669"/>
    <property type="project" value="UniProtKB-KW"/>
</dbReference>
<dbReference type="CDD" id="cd00104">
    <property type="entry name" value="KAZAL_FS"/>
    <property type="match status" value="1"/>
</dbReference>
<dbReference type="FunFam" id="3.30.60.30:FF:000037">
    <property type="entry name" value="Ovomucoid"/>
    <property type="match status" value="1"/>
</dbReference>
<dbReference type="Gene3D" id="3.30.60.30">
    <property type="match status" value="1"/>
</dbReference>
<dbReference type="InterPro" id="IPR051597">
    <property type="entry name" value="Bifunctional_prot_inhibitor"/>
</dbReference>
<dbReference type="InterPro" id="IPR002350">
    <property type="entry name" value="Kazal_dom"/>
</dbReference>
<dbReference type="InterPro" id="IPR036058">
    <property type="entry name" value="Kazal_dom_sf"/>
</dbReference>
<dbReference type="InterPro" id="IPR001239">
    <property type="entry name" value="Prot_inh_Kazal-m"/>
</dbReference>
<dbReference type="PANTHER" id="PTHR47729:SF1">
    <property type="entry name" value="OVOMUCOID-LIKE-RELATED"/>
    <property type="match status" value="1"/>
</dbReference>
<dbReference type="PANTHER" id="PTHR47729">
    <property type="entry name" value="SERINE PEPTIDASE INHIBITOR, KAZAL TYPE 2, TANDEM DUPLICATE 1-RELATED"/>
    <property type="match status" value="1"/>
</dbReference>
<dbReference type="Pfam" id="PF00050">
    <property type="entry name" value="Kazal_1"/>
    <property type="match status" value="1"/>
</dbReference>
<dbReference type="PRINTS" id="PR00290">
    <property type="entry name" value="KAZALINHBTR"/>
</dbReference>
<dbReference type="SMART" id="SM00280">
    <property type="entry name" value="KAZAL"/>
    <property type="match status" value="1"/>
</dbReference>
<dbReference type="SUPFAM" id="SSF100895">
    <property type="entry name" value="Kazal-type serine protease inhibitors"/>
    <property type="match status" value="1"/>
</dbReference>
<dbReference type="PROSITE" id="PS00282">
    <property type="entry name" value="KAZAL_1"/>
    <property type="match status" value="1"/>
</dbReference>
<dbReference type="PROSITE" id="PS51465">
    <property type="entry name" value="KAZAL_2"/>
    <property type="match status" value="1"/>
</dbReference>
<proteinExistence type="evidence at protein level"/>
<protein>
    <recommendedName>
        <fullName>Ovomucoid</fullName>
    </recommendedName>
</protein>
<organism>
    <name type="scientific">Centrocercus urophasianus</name>
    <name type="common">Sage grouse</name>
    <name type="synonym">Tetrao urophasianus</name>
    <dbReference type="NCBI Taxonomy" id="9002"/>
    <lineage>
        <taxon>Eukaryota</taxon>
        <taxon>Metazoa</taxon>
        <taxon>Chordata</taxon>
        <taxon>Craniata</taxon>
        <taxon>Vertebrata</taxon>
        <taxon>Euteleostomi</taxon>
        <taxon>Archelosauria</taxon>
        <taxon>Archosauria</taxon>
        <taxon>Dinosauria</taxon>
        <taxon>Saurischia</taxon>
        <taxon>Theropoda</taxon>
        <taxon>Coelurosauria</taxon>
        <taxon>Aves</taxon>
        <taxon>Neognathae</taxon>
        <taxon>Galloanserae</taxon>
        <taxon>Galliformes</taxon>
        <taxon>Phasianidae</taxon>
        <taxon>Tetraoninae</taxon>
        <taxon>Centrocercus</taxon>
    </lineage>
</organism>
<comment type="subcellular location">
    <subcellularLocation>
        <location>Secreted</location>
    </subcellularLocation>
</comment>
<comment type="domain">
    <text>Avian ovomucoid consists of three homologous, tandem Kazal family inhibitory domains.</text>
</comment>
<reference key="1">
    <citation type="journal article" date="1987" name="Biochemistry">
        <title>Ovomucoid third domains from 100 avian species: isolation, sequences, and hypervariability of enzyme-inhibitor contact residues.</title>
        <authorList>
            <person name="Laskowski M. Jr."/>
            <person name="Kato I."/>
            <person name="Ardelt W."/>
            <person name="Cook J."/>
            <person name="Denton A."/>
            <person name="Empie M.W."/>
            <person name="Kohr W.J."/>
            <person name="Park S.J."/>
            <person name="Parks K."/>
            <person name="Schatzley B.L."/>
            <person name="Schoenberger O.L."/>
            <person name="Tashiro M."/>
            <person name="Vichot G."/>
            <person name="Whatley H.E."/>
            <person name="Wieczorek A."/>
            <person name="Wieczorek M."/>
        </authorList>
    </citation>
    <scope>PROTEIN SEQUENCE</scope>
</reference>
<accession>P67945</accession>
<accession>P05586</accession>
<name>IOVO_CENUR</name>
<evidence type="ECO:0000255" key="1">
    <source>
        <dbReference type="PROSITE-ProRule" id="PRU00798"/>
    </source>
</evidence>
<sequence length="56" mass="6039">LAAVSVDCSEYPKPACTMEYRPLCGSDNKTYGNKCNFCNAVVESNGTLTLSHFGKC</sequence>
<keyword id="KW-0903">Direct protein sequencing</keyword>
<keyword id="KW-1015">Disulfide bond</keyword>
<keyword id="KW-0325">Glycoprotein</keyword>
<keyword id="KW-0646">Protease inhibitor</keyword>
<keyword id="KW-0677">Repeat</keyword>
<keyword id="KW-0964">Secreted</keyword>
<keyword id="KW-0722">Serine protease inhibitor</keyword>
<feature type="chain" id="PRO_0000073078" description="Ovomucoid">
    <location>
        <begin position="1" status="less than"/>
        <end position="56" status="greater than"/>
    </location>
</feature>
<feature type="domain" description="Kazal-like" evidence="1">
    <location>
        <begin position="6"/>
        <end position="56"/>
    </location>
</feature>
<feature type="site" description="Reactive bond 3">
    <location>
        <begin position="18"/>
        <end position="19"/>
    </location>
</feature>
<feature type="glycosylation site" description="N-linked (GlcNAc...) asparagine">
    <location>
        <position position="45"/>
    </location>
</feature>
<feature type="disulfide bond">
    <location>
        <begin position="8"/>
        <end position="38"/>
    </location>
</feature>
<feature type="disulfide bond">
    <location>
        <begin position="16"/>
        <end position="35"/>
    </location>
</feature>
<feature type="disulfide bond">
    <location>
        <begin position="24"/>
        <end position="56"/>
    </location>
</feature>
<feature type="non-terminal residue">
    <location>
        <position position="1"/>
    </location>
</feature>
<feature type="non-terminal residue">
    <location>
        <position position="56"/>
    </location>
</feature>